<comment type="function">
    <text evidence="1">RNaseP catalyzes the removal of the 5'-leader sequence from pre-tRNA to produce the mature 5'-terminus. It can also cleave other RNA substrates such as 4.5S RNA. The protein component plays an auxiliary but essential role in vivo by binding to the 5'-leader sequence and broadening the substrate specificity of the ribozyme.</text>
</comment>
<comment type="catalytic activity">
    <reaction evidence="1">
        <text>Endonucleolytic cleavage of RNA, removing 5'-extranucleotides from tRNA precursor.</text>
        <dbReference type="EC" id="3.1.26.5"/>
    </reaction>
</comment>
<comment type="subunit">
    <text evidence="1">Consists of a catalytic RNA component (M1 or rnpB) and a protein subunit.</text>
</comment>
<comment type="similarity">
    <text evidence="1">Belongs to the RnpA family.</text>
</comment>
<gene>
    <name evidence="1" type="primary">rnpA</name>
    <name type="ordered locus">PEPE_1846</name>
</gene>
<accession>Q03D57</accession>
<name>RNPA_PEDPA</name>
<protein>
    <recommendedName>
        <fullName evidence="1">Ribonuclease P protein component</fullName>
        <shortName evidence="1">RNase P protein</shortName>
        <shortName evidence="1">RNaseP protein</shortName>
        <ecNumber evidence="1">3.1.26.5</ecNumber>
    </recommendedName>
    <alternativeName>
        <fullName evidence="1">Protein C5</fullName>
    </alternativeName>
</protein>
<feature type="chain" id="PRO_1000021441" description="Ribonuclease P protein component">
    <location>
        <begin position="1"/>
        <end position="119"/>
    </location>
</feature>
<proteinExistence type="inferred from homology"/>
<keyword id="KW-0255">Endonuclease</keyword>
<keyword id="KW-0378">Hydrolase</keyword>
<keyword id="KW-0540">Nuclease</keyword>
<keyword id="KW-0694">RNA-binding</keyword>
<keyword id="KW-0819">tRNA processing</keyword>
<reference key="1">
    <citation type="journal article" date="2006" name="Proc. Natl. Acad. Sci. U.S.A.">
        <title>Comparative genomics of the lactic acid bacteria.</title>
        <authorList>
            <person name="Makarova K.S."/>
            <person name="Slesarev A."/>
            <person name="Wolf Y.I."/>
            <person name="Sorokin A."/>
            <person name="Mirkin B."/>
            <person name="Koonin E.V."/>
            <person name="Pavlov A."/>
            <person name="Pavlova N."/>
            <person name="Karamychev V."/>
            <person name="Polouchine N."/>
            <person name="Shakhova V."/>
            <person name="Grigoriev I."/>
            <person name="Lou Y."/>
            <person name="Rohksar D."/>
            <person name="Lucas S."/>
            <person name="Huang K."/>
            <person name="Goodstein D.M."/>
            <person name="Hawkins T."/>
            <person name="Plengvidhya V."/>
            <person name="Welker D."/>
            <person name="Hughes J."/>
            <person name="Goh Y."/>
            <person name="Benson A."/>
            <person name="Baldwin K."/>
            <person name="Lee J.-H."/>
            <person name="Diaz-Muniz I."/>
            <person name="Dosti B."/>
            <person name="Smeianov V."/>
            <person name="Wechter W."/>
            <person name="Barabote R."/>
            <person name="Lorca G."/>
            <person name="Altermann E."/>
            <person name="Barrangou R."/>
            <person name="Ganesan B."/>
            <person name="Xie Y."/>
            <person name="Rawsthorne H."/>
            <person name="Tamir D."/>
            <person name="Parker C."/>
            <person name="Breidt F."/>
            <person name="Broadbent J.R."/>
            <person name="Hutkins R."/>
            <person name="O'Sullivan D."/>
            <person name="Steele J."/>
            <person name="Unlu G."/>
            <person name="Saier M.H. Jr."/>
            <person name="Klaenhammer T."/>
            <person name="Richardson P."/>
            <person name="Kozyavkin S."/>
            <person name="Weimer B.C."/>
            <person name="Mills D.A."/>
        </authorList>
    </citation>
    <scope>NUCLEOTIDE SEQUENCE [LARGE SCALE GENOMIC DNA]</scope>
    <source>
        <strain>ATCC 25745 / CCUG 21536 / LMG 10740 / 183-1w</strain>
    </source>
</reference>
<organism>
    <name type="scientific">Pediococcus pentosaceus (strain ATCC 25745 / CCUG 21536 / LMG 10740 / 183-1w)</name>
    <dbReference type="NCBI Taxonomy" id="278197"/>
    <lineage>
        <taxon>Bacteria</taxon>
        <taxon>Bacillati</taxon>
        <taxon>Bacillota</taxon>
        <taxon>Bacilli</taxon>
        <taxon>Lactobacillales</taxon>
        <taxon>Lactobacillaceae</taxon>
        <taxon>Pediococcus</taxon>
    </lineage>
</organism>
<evidence type="ECO:0000255" key="1">
    <source>
        <dbReference type="HAMAP-Rule" id="MF_00227"/>
    </source>
</evidence>
<dbReference type="EC" id="3.1.26.5" evidence="1"/>
<dbReference type="EMBL" id="CP000422">
    <property type="protein sequence ID" value="ABJ68865.1"/>
    <property type="molecule type" value="Genomic_DNA"/>
</dbReference>
<dbReference type="RefSeq" id="WP_002833858.1">
    <property type="nucleotide sequence ID" value="NC_008525.1"/>
</dbReference>
<dbReference type="SMR" id="Q03D57"/>
<dbReference type="STRING" id="278197.PEPE_1846"/>
<dbReference type="GeneID" id="33062907"/>
<dbReference type="KEGG" id="ppe:PEPE_1846"/>
<dbReference type="eggNOG" id="COG0594">
    <property type="taxonomic scope" value="Bacteria"/>
</dbReference>
<dbReference type="HOGENOM" id="CLU_117179_9_1_9"/>
<dbReference type="OrthoDB" id="9810867at2"/>
<dbReference type="Proteomes" id="UP000000773">
    <property type="component" value="Chromosome"/>
</dbReference>
<dbReference type="GO" id="GO:0030677">
    <property type="term" value="C:ribonuclease P complex"/>
    <property type="evidence" value="ECO:0007669"/>
    <property type="project" value="TreeGrafter"/>
</dbReference>
<dbReference type="GO" id="GO:0042781">
    <property type="term" value="F:3'-tRNA processing endoribonuclease activity"/>
    <property type="evidence" value="ECO:0007669"/>
    <property type="project" value="TreeGrafter"/>
</dbReference>
<dbReference type="GO" id="GO:0004526">
    <property type="term" value="F:ribonuclease P activity"/>
    <property type="evidence" value="ECO:0007669"/>
    <property type="project" value="UniProtKB-UniRule"/>
</dbReference>
<dbReference type="GO" id="GO:0000049">
    <property type="term" value="F:tRNA binding"/>
    <property type="evidence" value="ECO:0007669"/>
    <property type="project" value="UniProtKB-UniRule"/>
</dbReference>
<dbReference type="GO" id="GO:0001682">
    <property type="term" value="P:tRNA 5'-leader removal"/>
    <property type="evidence" value="ECO:0007669"/>
    <property type="project" value="UniProtKB-UniRule"/>
</dbReference>
<dbReference type="FunFam" id="3.30.230.10:FF:000021">
    <property type="entry name" value="Ribonuclease P protein component"/>
    <property type="match status" value="1"/>
</dbReference>
<dbReference type="Gene3D" id="3.30.230.10">
    <property type="match status" value="1"/>
</dbReference>
<dbReference type="HAMAP" id="MF_00227">
    <property type="entry name" value="RNase_P"/>
    <property type="match status" value="1"/>
</dbReference>
<dbReference type="InterPro" id="IPR020568">
    <property type="entry name" value="Ribosomal_Su5_D2-typ_SF"/>
</dbReference>
<dbReference type="InterPro" id="IPR014721">
    <property type="entry name" value="Ribsml_uS5_D2-typ_fold_subgr"/>
</dbReference>
<dbReference type="InterPro" id="IPR000100">
    <property type="entry name" value="RNase_P"/>
</dbReference>
<dbReference type="NCBIfam" id="TIGR00188">
    <property type="entry name" value="rnpA"/>
    <property type="match status" value="1"/>
</dbReference>
<dbReference type="PANTHER" id="PTHR33992">
    <property type="entry name" value="RIBONUCLEASE P PROTEIN COMPONENT"/>
    <property type="match status" value="1"/>
</dbReference>
<dbReference type="PANTHER" id="PTHR33992:SF1">
    <property type="entry name" value="RIBONUCLEASE P PROTEIN COMPONENT"/>
    <property type="match status" value="1"/>
</dbReference>
<dbReference type="Pfam" id="PF00825">
    <property type="entry name" value="Ribonuclease_P"/>
    <property type="match status" value="1"/>
</dbReference>
<dbReference type="SUPFAM" id="SSF54211">
    <property type="entry name" value="Ribosomal protein S5 domain 2-like"/>
    <property type="match status" value="1"/>
</dbReference>
<sequence>MRKSYRIKKELEFQKVFETRNSFANKKFVVYVMDKPEQPHFRVGISVGKKIGNAVMRNYTKRRIRQSILEFKPLLRQDVDFLVIARPQASGLPMNEVKQQLEHVFKLAGLFASKQSEEE</sequence>